<gene>
    <name evidence="1" type="primary">ndk</name>
    <name type="ordered locus">Pnec_0662</name>
</gene>
<dbReference type="EC" id="2.7.4.6" evidence="1"/>
<dbReference type="EMBL" id="CP001010">
    <property type="protein sequence ID" value="ACB43899.1"/>
    <property type="molecule type" value="Genomic_DNA"/>
</dbReference>
<dbReference type="SMR" id="B1XU72"/>
<dbReference type="STRING" id="452638.Pnec_0662"/>
<dbReference type="KEGG" id="pne:Pnec_0662"/>
<dbReference type="eggNOG" id="COG0105">
    <property type="taxonomic scope" value="Bacteria"/>
</dbReference>
<dbReference type="HOGENOM" id="CLU_060216_8_1_4"/>
<dbReference type="OrthoDB" id="9801161at2"/>
<dbReference type="GO" id="GO:0005737">
    <property type="term" value="C:cytoplasm"/>
    <property type="evidence" value="ECO:0007669"/>
    <property type="project" value="UniProtKB-SubCell"/>
</dbReference>
<dbReference type="GO" id="GO:0005524">
    <property type="term" value="F:ATP binding"/>
    <property type="evidence" value="ECO:0007669"/>
    <property type="project" value="UniProtKB-UniRule"/>
</dbReference>
<dbReference type="GO" id="GO:0046872">
    <property type="term" value="F:metal ion binding"/>
    <property type="evidence" value="ECO:0007669"/>
    <property type="project" value="UniProtKB-KW"/>
</dbReference>
<dbReference type="GO" id="GO:0004550">
    <property type="term" value="F:nucleoside diphosphate kinase activity"/>
    <property type="evidence" value="ECO:0007669"/>
    <property type="project" value="UniProtKB-UniRule"/>
</dbReference>
<dbReference type="GO" id="GO:0006241">
    <property type="term" value="P:CTP biosynthetic process"/>
    <property type="evidence" value="ECO:0007669"/>
    <property type="project" value="UniProtKB-UniRule"/>
</dbReference>
<dbReference type="GO" id="GO:0006183">
    <property type="term" value="P:GTP biosynthetic process"/>
    <property type="evidence" value="ECO:0007669"/>
    <property type="project" value="UniProtKB-UniRule"/>
</dbReference>
<dbReference type="GO" id="GO:0006228">
    <property type="term" value="P:UTP biosynthetic process"/>
    <property type="evidence" value="ECO:0007669"/>
    <property type="project" value="UniProtKB-UniRule"/>
</dbReference>
<dbReference type="CDD" id="cd04413">
    <property type="entry name" value="NDPk_I"/>
    <property type="match status" value="1"/>
</dbReference>
<dbReference type="FunFam" id="3.30.70.141:FF:000001">
    <property type="entry name" value="Nucleoside diphosphate kinase"/>
    <property type="match status" value="1"/>
</dbReference>
<dbReference type="Gene3D" id="3.30.70.141">
    <property type="entry name" value="Nucleoside diphosphate kinase-like domain"/>
    <property type="match status" value="1"/>
</dbReference>
<dbReference type="HAMAP" id="MF_00451">
    <property type="entry name" value="NDP_kinase"/>
    <property type="match status" value="1"/>
</dbReference>
<dbReference type="InterPro" id="IPR034907">
    <property type="entry name" value="NDK-like_dom"/>
</dbReference>
<dbReference type="InterPro" id="IPR036850">
    <property type="entry name" value="NDK-like_dom_sf"/>
</dbReference>
<dbReference type="InterPro" id="IPR001564">
    <property type="entry name" value="Nucleoside_diP_kinase"/>
</dbReference>
<dbReference type="InterPro" id="IPR023005">
    <property type="entry name" value="Nucleoside_diP_kinase_AS"/>
</dbReference>
<dbReference type="NCBIfam" id="NF001908">
    <property type="entry name" value="PRK00668.1"/>
    <property type="match status" value="1"/>
</dbReference>
<dbReference type="PANTHER" id="PTHR46161">
    <property type="entry name" value="NUCLEOSIDE DIPHOSPHATE KINASE"/>
    <property type="match status" value="1"/>
</dbReference>
<dbReference type="PANTHER" id="PTHR46161:SF3">
    <property type="entry name" value="NUCLEOSIDE DIPHOSPHATE KINASE DDB_G0292928-RELATED"/>
    <property type="match status" value="1"/>
</dbReference>
<dbReference type="Pfam" id="PF00334">
    <property type="entry name" value="NDK"/>
    <property type="match status" value="1"/>
</dbReference>
<dbReference type="PRINTS" id="PR01243">
    <property type="entry name" value="NUCDPKINASE"/>
</dbReference>
<dbReference type="SMART" id="SM00562">
    <property type="entry name" value="NDK"/>
    <property type="match status" value="1"/>
</dbReference>
<dbReference type="SUPFAM" id="SSF54919">
    <property type="entry name" value="Nucleoside diphosphate kinase, NDK"/>
    <property type="match status" value="1"/>
</dbReference>
<dbReference type="PROSITE" id="PS00469">
    <property type="entry name" value="NDPK"/>
    <property type="match status" value="1"/>
</dbReference>
<dbReference type="PROSITE" id="PS51374">
    <property type="entry name" value="NDPK_LIKE"/>
    <property type="match status" value="1"/>
</dbReference>
<name>NDK_POLNS</name>
<evidence type="ECO:0000255" key="1">
    <source>
        <dbReference type="HAMAP-Rule" id="MF_00451"/>
    </source>
</evidence>
<reference key="1">
    <citation type="journal article" date="2013" name="Proc. Natl. Acad. Sci. U.S.A.">
        <title>Polynucleobacter necessarius, a model for genome reduction in both free-living and symbiotic bacteria.</title>
        <authorList>
            <person name="Boscaro V."/>
            <person name="Felletti M."/>
            <person name="Vannini C."/>
            <person name="Ackerman M.S."/>
            <person name="Chain P.S."/>
            <person name="Malfatti S."/>
            <person name="Vergez L.M."/>
            <person name="Shin M."/>
            <person name="Doak T.G."/>
            <person name="Lynch M."/>
            <person name="Petroni G."/>
        </authorList>
    </citation>
    <scope>NUCLEOTIDE SEQUENCE [LARGE SCALE GENOMIC DNA]</scope>
    <source>
        <strain>STIR1</strain>
    </source>
</reference>
<keyword id="KW-0067">ATP-binding</keyword>
<keyword id="KW-0963">Cytoplasm</keyword>
<keyword id="KW-0418">Kinase</keyword>
<keyword id="KW-0460">Magnesium</keyword>
<keyword id="KW-0479">Metal-binding</keyword>
<keyword id="KW-0546">Nucleotide metabolism</keyword>
<keyword id="KW-0547">Nucleotide-binding</keyword>
<keyword id="KW-0597">Phosphoprotein</keyword>
<keyword id="KW-0808">Transferase</keyword>
<organism>
    <name type="scientific">Polynucleobacter necessarius subsp. necessarius (strain STIR1)</name>
    <dbReference type="NCBI Taxonomy" id="452638"/>
    <lineage>
        <taxon>Bacteria</taxon>
        <taxon>Pseudomonadati</taxon>
        <taxon>Pseudomonadota</taxon>
        <taxon>Betaproteobacteria</taxon>
        <taxon>Burkholderiales</taxon>
        <taxon>Burkholderiaceae</taxon>
        <taxon>Polynucleobacter</taxon>
    </lineage>
</organism>
<proteinExistence type="inferred from homology"/>
<accession>B1XU72</accession>
<sequence>MAIERTLSIIKPDAVAKNVIGKIYDRFESAGLKIVASKMAHLSQNEAEQFYGVHKDRPFFKDLVSFMISGPVMIQVLQGEGAIAKNRDLMGATDPKKAEKGTIRADFADSIDANAVHGSDAPETAAVEVAFFFPGMNVFNR</sequence>
<feature type="chain" id="PRO_1000192285" description="Nucleoside diphosphate kinase">
    <location>
        <begin position="1"/>
        <end position="141"/>
    </location>
</feature>
<feature type="active site" description="Pros-phosphohistidine intermediate" evidence="1">
    <location>
        <position position="117"/>
    </location>
</feature>
<feature type="binding site" evidence="1">
    <location>
        <position position="11"/>
    </location>
    <ligand>
        <name>ATP</name>
        <dbReference type="ChEBI" id="CHEBI:30616"/>
    </ligand>
</feature>
<feature type="binding site" evidence="1">
    <location>
        <position position="59"/>
    </location>
    <ligand>
        <name>ATP</name>
        <dbReference type="ChEBI" id="CHEBI:30616"/>
    </ligand>
</feature>
<feature type="binding site" evidence="1">
    <location>
        <position position="87"/>
    </location>
    <ligand>
        <name>ATP</name>
        <dbReference type="ChEBI" id="CHEBI:30616"/>
    </ligand>
</feature>
<feature type="binding site" evidence="1">
    <location>
        <position position="93"/>
    </location>
    <ligand>
        <name>ATP</name>
        <dbReference type="ChEBI" id="CHEBI:30616"/>
    </ligand>
</feature>
<feature type="binding site" evidence="1">
    <location>
        <position position="104"/>
    </location>
    <ligand>
        <name>ATP</name>
        <dbReference type="ChEBI" id="CHEBI:30616"/>
    </ligand>
</feature>
<feature type="binding site" evidence="1">
    <location>
        <position position="114"/>
    </location>
    <ligand>
        <name>ATP</name>
        <dbReference type="ChEBI" id="CHEBI:30616"/>
    </ligand>
</feature>
<protein>
    <recommendedName>
        <fullName evidence="1">Nucleoside diphosphate kinase</fullName>
        <shortName evidence="1">NDK</shortName>
        <shortName evidence="1">NDP kinase</shortName>
        <ecNumber evidence="1">2.7.4.6</ecNumber>
    </recommendedName>
    <alternativeName>
        <fullName evidence="1">Nucleoside-2-P kinase</fullName>
    </alternativeName>
</protein>
<comment type="function">
    <text evidence="1">Major role in the synthesis of nucleoside triphosphates other than ATP. The ATP gamma phosphate is transferred to the NDP beta phosphate via a ping-pong mechanism, using a phosphorylated active-site intermediate.</text>
</comment>
<comment type="catalytic activity">
    <reaction evidence="1">
        <text>a 2'-deoxyribonucleoside 5'-diphosphate + ATP = a 2'-deoxyribonucleoside 5'-triphosphate + ADP</text>
        <dbReference type="Rhea" id="RHEA:44640"/>
        <dbReference type="ChEBI" id="CHEBI:30616"/>
        <dbReference type="ChEBI" id="CHEBI:61560"/>
        <dbReference type="ChEBI" id="CHEBI:73316"/>
        <dbReference type="ChEBI" id="CHEBI:456216"/>
        <dbReference type="EC" id="2.7.4.6"/>
    </reaction>
</comment>
<comment type="catalytic activity">
    <reaction evidence="1">
        <text>a ribonucleoside 5'-diphosphate + ATP = a ribonucleoside 5'-triphosphate + ADP</text>
        <dbReference type="Rhea" id="RHEA:18113"/>
        <dbReference type="ChEBI" id="CHEBI:30616"/>
        <dbReference type="ChEBI" id="CHEBI:57930"/>
        <dbReference type="ChEBI" id="CHEBI:61557"/>
        <dbReference type="ChEBI" id="CHEBI:456216"/>
        <dbReference type="EC" id="2.7.4.6"/>
    </reaction>
</comment>
<comment type="cofactor">
    <cofactor evidence="1">
        <name>Mg(2+)</name>
        <dbReference type="ChEBI" id="CHEBI:18420"/>
    </cofactor>
</comment>
<comment type="subunit">
    <text evidence="1">Homotetramer.</text>
</comment>
<comment type="subcellular location">
    <subcellularLocation>
        <location evidence="1">Cytoplasm</location>
    </subcellularLocation>
</comment>
<comment type="similarity">
    <text evidence="1">Belongs to the NDK family.</text>
</comment>